<evidence type="ECO:0000255" key="1">
    <source>
        <dbReference type="HAMAP-Rule" id="MF_00318"/>
    </source>
</evidence>
<protein>
    <recommendedName>
        <fullName evidence="1">Enolase</fullName>
        <ecNumber evidence="1">4.2.1.11</ecNumber>
    </recommendedName>
    <alternativeName>
        <fullName evidence="1">2-phospho-D-glycerate hydro-lyase</fullName>
    </alternativeName>
    <alternativeName>
        <fullName evidence="1">2-phosphoglycerate dehydratase</fullName>
    </alternativeName>
</protein>
<accession>Q6KIB0</accession>
<reference key="1">
    <citation type="journal article" date="2004" name="Genome Res.">
        <title>The complete genome and proteome of Mycoplasma mobile.</title>
        <authorList>
            <person name="Jaffe J.D."/>
            <person name="Stange-Thomann N."/>
            <person name="Smith C."/>
            <person name="DeCaprio D."/>
            <person name="Fisher S."/>
            <person name="Butler J."/>
            <person name="Calvo S."/>
            <person name="Elkins T."/>
            <person name="FitzGerald M.G."/>
            <person name="Hafez N."/>
            <person name="Kodira C.D."/>
            <person name="Major J."/>
            <person name="Wang S."/>
            <person name="Wilkinson J."/>
            <person name="Nicol R."/>
            <person name="Nusbaum C."/>
            <person name="Birren B."/>
            <person name="Berg H.C."/>
            <person name="Church G.M."/>
        </authorList>
    </citation>
    <scope>NUCLEOTIDE SEQUENCE [LARGE SCALE GENOMIC DNA]</scope>
    <source>
        <strain>ATCC 43663 / NCTC 11711 / 163 K</strain>
    </source>
</reference>
<organism>
    <name type="scientific">Mycoplasma mobile (strain ATCC 43663 / 163K / NCTC 11711)</name>
    <name type="common">Mesomycoplasma mobile</name>
    <dbReference type="NCBI Taxonomy" id="267748"/>
    <lineage>
        <taxon>Bacteria</taxon>
        <taxon>Bacillati</taxon>
        <taxon>Mycoplasmatota</taxon>
        <taxon>Mycoplasmoidales</taxon>
        <taxon>Metamycoplasmataceae</taxon>
        <taxon>Mesomycoplasma</taxon>
    </lineage>
</organism>
<comment type="function">
    <text evidence="1">Catalyzes the reversible conversion of 2-phosphoglycerate (2-PG) into phosphoenolpyruvate (PEP). It is essential for the degradation of carbohydrates via glycolysis.</text>
</comment>
<comment type="catalytic activity">
    <reaction evidence="1">
        <text>(2R)-2-phosphoglycerate = phosphoenolpyruvate + H2O</text>
        <dbReference type="Rhea" id="RHEA:10164"/>
        <dbReference type="ChEBI" id="CHEBI:15377"/>
        <dbReference type="ChEBI" id="CHEBI:58289"/>
        <dbReference type="ChEBI" id="CHEBI:58702"/>
        <dbReference type="EC" id="4.2.1.11"/>
    </reaction>
</comment>
<comment type="cofactor">
    <cofactor evidence="1">
        <name>Mg(2+)</name>
        <dbReference type="ChEBI" id="CHEBI:18420"/>
    </cofactor>
    <text evidence="1">Binds a second Mg(2+) ion via substrate during catalysis.</text>
</comment>
<comment type="pathway">
    <text evidence="1">Carbohydrate degradation; glycolysis; pyruvate from D-glyceraldehyde 3-phosphate: step 4/5.</text>
</comment>
<comment type="subcellular location">
    <subcellularLocation>
        <location evidence="1">Cytoplasm</location>
    </subcellularLocation>
    <subcellularLocation>
        <location evidence="1">Secreted</location>
    </subcellularLocation>
    <subcellularLocation>
        <location evidence="1">Cell surface</location>
    </subcellularLocation>
    <text evidence="1">Fractions of enolase are present in both the cytoplasm and on the cell surface.</text>
</comment>
<comment type="similarity">
    <text evidence="1">Belongs to the enolase family.</text>
</comment>
<name>ENO_MYCM1</name>
<sequence>MSAIMRIHAREVLDSRGNPTIQIEVESEYGYGSAMVPSGASTGEKEAKELRDKGTKYEKNWYGGKGVQTAVDNVNNIIAPKIEGYDVLDQRAIDYEMIKLDGTEFKEKLGANAILGVSLAVAKAAADELNIPLYRYVGGTNGFKLPVPMLNVINGGEHASNTVDFQEFLIMPIGAKTFKEAMQVANKVFHNLKDLLASQGHSTAVGDEGGFAPDLKSHEEVLDFIVSAIKKAGYEPSKKGDKAVAIAIDAASSELFDKKSKTYTFKKLKKAILTKQPGFENLGKVKVEYSSDELVEYFKDLFKKYPIISLEDGFSEHDWDAFTKLNNSVGATHQIMGDDLVTTNPKFIKKAIETKAINSVLIKLNQIGTLSETMDAIEMAHKAGMTCVVSHRSGETEDTTIADLAVALNTGQIKTGSISRTDRVAKYNRLLVIEEELGIVASYEGIQVFHNLKVK</sequence>
<proteinExistence type="inferred from homology"/>
<dbReference type="EC" id="4.2.1.11" evidence="1"/>
<dbReference type="EMBL" id="AE017308">
    <property type="protein sequence ID" value="AAT27666.1"/>
    <property type="molecule type" value="Genomic_DNA"/>
</dbReference>
<dbReference type="RefSeq" id="WP_011264700.1">
    <property type="nucleotide sequence ID" value="NC_006908.1"/>
</dbReference>
<dbReference type="SMR" id="Q6KIB0"/>
<dbReference type="STRING" id="267748.MMOB1800"/>
<dbReference type="KEGG" id="mmo:MMOB1800"/>
<dbReference type="eggNOG" id="COG0148">
    <property type="taxonomic scope" value="Bacteria"/>
</dbReference>
<dbReference type="HOGENOM" id="CLU_031223_2_1_14"/>
<dbReference type="OrthoDB" id="9804716at2"/>
<dbReference type="UniPathway" id="UPA00109">
    <property type="reaction ID" value="UER00187"/>
</dbReference>
<dbReference type="Proteomes" id="UP000009072">
    <property type="component" value="Chromosome"/>
</dbReference>
<dbReference type="GO" id="GO:0009986">
    <property type="term" value="C:cell surface"/>
    <property type="evidence" value="ECO:0007669"/>
    <property type="project" value="UniProtKB-SubCell"/>
</dbReference>
<dbReference type="GO" id="GO:0005576">
    <property type="term" value="C:extracellular region"/>
    <property type="evidence" value="ECO:0007669"/>
    <property type="project" value="UniProtKB-SubCell"/>
</dbReference>
<dbReference type="GO" id="GO:0000015">
    <property type="term" value="C:phosphopyruvate hydratase complex"/>
    <property type="evidence" value="ECO:0007669"/>
    <property type="project" value="InterPro"/>
</dbReference>
<dbReference type="GO" id="GO:0000287">
    <property type="term" value="F:magnesium ion binding"/>
    <property type="evidence" value="ECO:0007669"/>
    <property type="project" value="UniProtKB-UniRule"/>
</dbReference>
<dbReference type="GO" id="GO:0004634">
    <property type="term" value="F:phosphopyruvate hydratase activity"/>
    <property type="evidence" value="ECO:0007669"/>
    <property type="project" value="UniProtKB-UniRule"/>
</dbReference>
<dbReference type="GO" id="GO:0006096">
    <property type="term" value="P:glycolytic process"/>
    <property type="evidence" value="ECO:0007669"/>
    <property type="project" value="UniProtKB-UniRule"/>
</dbReference>
<dbReference type="CDD" id="cd03313">
    <property type="entry name" value="enolase"/>
    <property type="match status" value="1"/>
</dbReference>
<dbReference type="FunFam" id="3.30.390.10:FF:000001">
    <property type="entry name" value="Enolase"/>
    <property type="match status" value="1"/>
</dbReference>
<dbReference type="Gene3D" id="3.20.20.120">
    <property type="entry name" value="Enolase-like C-terminal domain"/>
    <property type="match status" value="1"/>
</dbReference>
<dbReference type="Gene3D" id="3.30.390.10">
    <property type="entry name" value="Enolase-like, N-terminal domain"/>
    <property type="match status" value="1"/>
</dbReference>
<dbReference type="HAMAP" id="MF_00318">
    <property type="entry name" value="Enolase"/>
    <property type="match status" value="1"/>
</dbReference>
<dbReference type="InterPro" id="IPR000941">
    <property type="entry name" value="Enolase"/>
</dbReference>
<dbReference type="InterPro" id="IPR036849">
    <property type="entry name" value="Enolase-like_C_sf"/>
</dbReference>
<dbReference type="InterPro" id="IPR029017">
    <property type="entry name" value="Enolase-like_N"/>
</dbReference>
<dbReference type="InterPro" id="IPR020810">
    <property type="entry name" value="Enolase_C"/>
</dbReference>
<dbReference type="InterPro" id="IPR020809">
    <property type="entry name" value="Enolase_CS"/>
</dbReference>
<dbReference type="InterPro" id="IPR020811">
    <property type="entry name" value="Enolase_N"/>
</dbReference>
<dbReference type="NCBIfam" id="TIGR01060">
    <property type="entry name" value="eno"/>
    <property type="match status" value="1"/>
</dbReference>
<dbReference type="PANTHER" id="PTHR11902">
    <property type="entry name" value="ENOLASE"/>
    <property type="match status" value="1"/>
</dbReference>
<dbReference type="PANTHER" id="PTHR11902:SF1">
    <property type="entry name" value="ENOLASE"/>
    <property type="match status" value="1"/>
</dbReference>
<dbReference type="Pfam" id="PF00113">
    <property type="entry name" value="Enolase_C"/>
    <property type="match status" value="1"/>
</dbReference>
<dbReference type="Pfam" id="PF03952">
    <property type="entry name" value="Enolase_N"/>
    <property type="match status" value="1"/>
</dbReference>
<dbReference type="PIRSF" id="PIRSF001400">
    <property type="entry name" value="Enolase"/>
    <property type="match status" value="1"/>
</dbReference>
<dbReference type="PRINTS" id="PR00148">
    <property type="entry name" value="ENOLASE"/>
</dbReference>
<dbReference type="SFLD" id="SFLDS00001">
    <property type="entry name" value="Enolase"/>
    <property type="match status" value="1"/>
</dbReference>
<dbReference type="SFLD" id="SFLDF00002">
    <property type="entry name" value="enolase"/>
    <property type="match status" value="1"/>
</dbReference>
<dbReference type="SMART" id="SM01192">
    <property type="entry name" value="Enolase_C"/>
    <property type="match status" value="1"/>
</dbReference>
<dbReference type="SMART" id="SM01193">
    <property type="entry name" value="Enolase_N"/>
    <property type="match status" value="1"/>
</dbReference>
<dbReference type="SUPFAM" id="SSF51604">
    <property type="entry name" value="Enolase C-terminal domain-like"/>
    <property type="match status" value="1"/>
</dbReference>
<dbReference type="SUPFAM" id="SSF54826">
    <property type="entry name" value="Enolase N-terminal domain-like"/>
    <property type="match status" value="1"/>
</dbReference>
<dbReference type="PROSITE" id="PS00164">
    <property type="entry name" value="ENOLASE"/>
    <property type="match status" value="1"/>
</dbReference>
<feature type="chain" id="PRO_0000133926" description="Enolase">
    <location>
        <begin position="1"/>
        <end position="455"/>
    </location>
</feature>
<feature type="active site" description="Proton donor" evidence="1">
    <location>
        <position position="208"/>
    </location>
</feature>
<feature type="active site" description="Proton acceptor" evidence="1">
    <location>
        <position position="363"/>
    </location>
</feature>
<feature type="binding site" evidence="1">
    <location>
        <position position="166"/>
    </location>
    <ligand>
        <name>(2R)-2-phosphoglycerate</name>
        <dbReference type="ChEBI" id="CHEBI:58289"/>
    </ligand>
</feature>
<feature type="binding site" evidence="1">
    <location>
        <position position="249"/>
    </location>
    <ligand>
        <name>Mg(2+)</name>
        <dbReference type="ChEBI" id="CHEBI:18420"/>
    </ligand>
</feature>
<feature type="binding site" evidence="1">
    <location>
        <position position="311"/>
    </location>
    <ligand>
        <name>Mg(2+)</name>
        <dbReference type="ChEBI" id="CHEBI:18420"/>
    </ligand>
</feature>
<feature type="binding site" evidence="1">
    <location>
        <position position="338"/>
    </location>
    <ligand>
        <name>Mg(2+)</name>
        <dbReference type="ChEBI" id="CHEBI:18420"/>
    </ligand>
</feature>
<feature type="binding site" evidence="1">
    <location>
        <position position="363"/>
    </location>
    <ligand>
        <name>(2R)-2-phosphoglycerate</name>
        <dbReference type="ChEBI" id="CHEBI:58289"/>
    </ligand>
</feature>
<feature type="binding site" evidence="1">
    <location>
        <position position="392"/>
    </location>
    <ligand>
        <name>(2R)-2-phosphoglycerate</name>
        <dbReference type="ChEBI" id="CHEBI:58289"/>
    </ligand>
</feature>
<feature type="binding site" evidence="1">
    <location>
        <position position="393"/>
    </location>
    <ligand>
        <name>(2R)-2-phosphoglycerate</name>
        <dbReference type="ChEBI" id="CHEBI:58289"/>
    </ligand>
</feature>
<feature type="binding site" evidence="1">
    <location>
        <position position="414"/>
    </location>
    <ligand>
        <name>(2R)-2-phosphoglycerate</name>
        <dbReference type="ChEBI" id="CHEBI:58289"/>
    </ligand>
</feature>
<keyword id="KW-0963">Cytoplasm</keyword>
<keyword id="KW-0324">Glycolysis</keyword>
<keyword id="KW-0456">Lyase</keyword>
<keyword id="KW-0460">Magnesium</keyword>
<keyword id="KW-0479">Metal-binding</keyword>
<keyword id="KW-1185">Reference proteome</keyword>
<keyword id="KW-0964">Secreted</keyword>
<gene>
    <name evidence="1" type="primary">eno</name>
    <name type="ordered locus">MMOB1800</name>
</gene>